<feature type="chain" id="PRO_0000264093" description="Peptidyl-tRNA hydrolase">
    <location>
        <begin position="1"/>
        <end position="207"/>
    </location>
</feature>
<feature type="active site" description="Proton acceptor" evidence="1">
    <location>
        <position position="19"/>
    </location>
</feature>
<feature type="binding site" evidence="1">
    <location>
        <position position="14"/>
    </location>
    <ligand>
        <name>tRNA</name>
        <dbReference type="ChEBI" id="CHEBI:17843"/>
    </ligand>
</feature>
<feature type="binding site" evidence="1">
    <location>
        <position position="64"/>
    </location>
    <ligand>
        <name>tRNA</name>
        <dbReference type="ChEBI" id="CHEBI:17843"/>
    </ligand>
</feature>
<feature type="binding site" evidence="1">
    <location>
        <position position="66"/>
    </location>
    <ligand>
        <name>tRNA</name>
        <dbReference type="ChEBI" id="CHEBI:17843"/>
    </ligand>
</feature>
<feature type="binding site" evidence="1">
    <location>
        <position position="112"/>
    </location>
    <ligand>
        <name>tRNA</name>
        <dbReference type="ChEBI" id="CHEBI:17843"/>
    </ligand>
</feature>
<feature type="site" description="Discriminates between blocked and unblocked aminoacyl-tRNA" evidence="1">
    <location>
        <position position="9"/>
    </location>
</feature>
<feature type="site" description="Stabilizes the basic form of H active site to accept a proton" evidence="1">
    <location>
        <position position="91"/>
    </location>
</feature>
<organism>
    <name type="scientific">Rhodopseudomonas palustris (strain BisB5)</name>
    <dbReference type="NCBI Taxonomy" id="316057"/>
    <lineage>
        <taxon>Bacteria</taxon>
        <taxon>Pseudomonadati</taxon>
        <taxon>Pseudomonadota</taxon>
        <taxon>Alphaproteobacteria</taxon>
        <taxon>Hyphomicrobiales</taxon>
        <taxon>Nitrobacteraceae</taxon>
        <taxon>Rhodopseudomonas</taxon>
    </lineage>
</organism>
<name>PTH_RHOPS</name>
<evidence type="ECO:0000255" key="1">
    <source>
        <dbReference type="HAMAP-Rule" id="MF_00083"/>
    </source>
</evidence>
<sequence>MRLFVGLGNPGSKYQDNRHNIGFMVIDEIARRHGFSPWRRRFQGETADGSLDGERITLLKPLTYMNESGRAVQEAVSFYKIGHGEVAVFHDEIELPPAKLRVKVGGGIAGHNGLRSISAHIGNDYLRVRLGVGHPGVKELVHGHVLGDFAKSERPWVAALAEAVADNAGLIAKGREATFANKVHLALQARGFLDDDNKKSGADKAAK</sequence>
<keyword id="KW-0963">Cytoplasm</keyword>
<keyword id="KW-0378">Hydrolase</keyword>
<keyword id="KW-0694">RNA-binding</keyword>
<keyword id="KW-0820">tRNA-binding</keyword>
<comment type="function">
    <text evidence="1">Hydrolyzes ribosome-free peptidyl-tRNAs (with 1 or more amino acids incorporated), which drop off the ribosome during protein synthesis, or as a result of ribosome stalling.</text>
</comment>
<comment type="function">
    <text evidence="1">Catalyzes the release of premature peptidyl moieties from peptidyl-tRNA molecules trapped in stalled 50S ribosomal subunits, and thus maintains levels of free tRNAs and 50S ribosomes.</text>
</comment>
<comment type="catalytic activity">
    <reaction evidence="1">
        <text>an N-acyl-L-alpha-aminoacyl-tRNA + H2O = an N-acyl-L-amino acid + a tRNA + H(+)</text>
        <dbReference type="Rhea" id="RHEA:54448"/>
        <dbReference type="Rhea" id="RHEA-COMP:10123"/>
        <dbReference type="Rhea" id="RHEA-COMP:13883"/>
        <dbReference type="ChEBI" id="CHEBI:15377"/>
        <dbReference type="ChEBI" id="CHEBI:15378"/>
        <dbReference type="ChEBI" id="CHEBI:59874"/>
        <dbReference type="ChEBI" id="CHEBI:78442"/>
        <dbReference type="ChEBI" id="CHEBI:138191"/>
        <dbReference type="EC" id="3.1.1.29"/>
    </reaction>
</comment>
<comment type="subunit">
    <text evidence="1">Monomer.</text>
</comment>
<comment type="subcellular location">
    <subcellularLocation>
        <location evidence="1">Cytoplasm</location>
    </subcellularLocation>
</comment>
<comment type="similarity">
    <text evidence="1">Belongs to the PTH family.</text>
</comment>
<reference key="1">
    <citation type="submission" date="2006-03" db="EMBL/GenBank/DDBJ databases">
        <title>Complete sequence of Rhodopseudomonas palustris BisB5.</title>
        <authorList>
            <consortium name="US DOE Joint Genome Institute"/>
            <person name="Copeland A."/>
            <person name="Lucas S."/>
            <person name="Lapidus A."/>
            <person name="Barry K."/>
            <person name="Detter J.C."/>
            <person name="Glavina del Rio T."/>
            <person name="Hammon N."/>
            <person name="Israni S."/>
            <person name="Dalin E."/>
            <person name="Tice H."/>
            <person name="Pitluck S."/>
            <person name="Chain P."/>
            <person name="Malfatti S."/>
            <person name="Shin M."/>
            <person name="Vergez L."/>
            <person name="Schmutz J."/>
            <person name="Larimer F."/>
            <person name="Land M."/>
            <person name="Hauser L."/>
            <person name="Pelletier D.A."/>
            <person name="Kyrpides N."/>
            <person name="Lykidis A."/>
            <person name="Oda Y."/>
            <person name="Harwood C.S."/>
            <person name="Richardson P."/>
        </authorList>
    </citation>
    <scope>NUCLEOTIDE SEQUENCE [LARGE SCALE GENOMIC DNA]</scope>
    <source>
        <strain>BisB5</strain>
    </source>
</reference>
<protein>
    <recommendedName>
        <fullName evidence="1">Peptidyl-tRNA hydrolase</fullName>
        <shortName evidence="1">Pth</shortName>
        <ecNumber evidence="1">3.1.1.29</ecNumber>
    </recommendedName>
</protein>
<gene>
    <name evidence="1" type="primary">pth</name>
    <name type="ordered locus">RPD_4000</name>
</gene>
<proteinExistence type="inferred from homology"/>
<dbReference type="EC" id="3.1.1.29" evidence="1"/>
<dbReference type="EMBL" id="CP000283">
    <property type="protein sequence ID" value="ABE41219.1"/>
    <property type="molecule type" value="Genomic_DNA"/>
</dbReference>
<dbReference type="SMR" id="Q131M0"/>
<dbReference type="STRING" id="316057.RPD_4000"/>
<dbReference type="KEGG" id="rpd:RPD_4000"/>
<dbReference type="eggNOG" id="COG0193">
    <property type="taxonomic scope" value="Bacteria"/>
</dbReference>
<dbReference type="HOGENOM" id="CLU_062456_1_1_5"/>
<dbReference type="BioCyc" id="RPAL316057:RPD_RS20110-MONOMER"/>
<dbReference type="Proteomes" id="UP000001818">
    <property type="component" value="Chromosome"/>
</dbReference>
<dbReference type="GO" id="GO:0005737">
    <property type="term" value="C:cytoplasm"/>
    <property type="evidence" value="ECO:0007669"/>
    <property type="project" value="UniProtKB-SubCell"/>
</dbReference>
<dbReference type="GO" id="GO:0004045">
    <property type="term" value="F:peptidyl-tRNA hydrolase activity"/>
    <property type="evidence" value="ECO:0007669"/>
    <property type="project" value="UniProtKB-UniRule"/>
</dbReference>
<dbReference type="GO" id="GO:0000049">
    <property type="term" value="F:tRNA binding"/>
    <property type="evidence" value="ECO:0007669"/>
    <property type="project" value="UniProtKB-UniRule"/>
</dbReference>
<dbReference type="GO" id="GO:0006515">
    <property type="term" value="P:protein quality control for misfolded or incompletely synthesized proteins"/>
    <property type="evidence" value="ECO:0007669"/>
    <property type="project" value="UniProtKB-UniRule"/>
</dbReference>
<dbReference type="GO" id="GO:0072344">
    <property type="term" value="P:rescue of stalled ribosome"/>
    <property type="evidence" value="ECO:0007669"/>
    <property type="project" value="UniProtKB-UniRule"/>
</dbReference>
<dbReference type="CDD" id="cd00462">
    <property type="entry name" value="PTH"/>
    <property type="match status" value="1"/>
</dbReference>
<dbReference type="FunFam" id="3.40.50.1470:FF:000001">
    <property type="entry name" value="Peptidyl-tRNA hydrolase"/>
    <property type="match status" value="1"/>
</dbReference>
<dbReference type="Gene3D" id="3.40.50.1470">
    <property type="entry name" value="Peptidyl-tRNA hydrolase"/>
    <property type="match status" value="1"/>
</dbReference>
<dbReference type="HAMAP" id="MF_00083">
    <property type="entry name" value="Pept_tRNA_hydro_bact"/>
    <property type="match status" value="1"/>
</dbReference>
<dbReference type="InterPro" id="IPR001328">
    <property type="entry name" value="Pept_tRNA_hydro"/>
</dbReference>
<dbReference type="InterPro" id="IPR018171">
    <property type="entry name" value="Pept_tRNA_hydro_CS"/>
</dbReference>
<dbReference type="InterPro" id="IPR036416">
    <property type="entry name" value="Pept_tRNA_hydro_sf"/>
</dbReference>
<dbReference type="NCBIfam" id="TIGR00447">
    <property type="entry name" value="pth"/>
    <property type="match status" value="1"/>
</dbReference>
<dbReference type="PANTHER" id="PTHR17224">
    <property type="entry name" value="PEPTIDYL-TRNA HYDROLASE"/>
    <property type="match status" value="1"/>
</dbReference>
<dbReference type="PANTHER" id="PTHR17224:SF1">
    <property type="entry name" value="PEPTIDYL-TRNA HYDROLASE"/>
    <property type="match status" value="1"/>
</dbReference>
<dbReference type="Pfam" id="PF01195">
    <property type="entry name" value="Pept_tRNA_hydro"/>
    <property type="match status" value="1"/>
</dbReference>
<dbReference type="SUPFAM" id="SSF53178">
    <property type="entry name" value="Peptidyl-tRNA hydrolase-like"/>
    <property type="match status" value="1"/>
</dbReference>
<dbReference type="PROSITE" id="PS01195">
    <property type="entry name" value="PEPT_TRNA_HYDROL_1"/>
    <property type="match status" value="1"/>
</dbReference>
<dbReference type="PROSITE" id="PS01196">
    <property type="entry name" value="PEPT_TRNA_HYDROL_2"/>
    <property type="match status" value="1"/>
</dbReference>
<accession>Q131M0</accession>